<dbReference type="EMBL" id="CP000878">
    <property type="protein sequence ID" value="ABX09596.1"/>
    <property type="molecule type" value="Genomic_DNA"/>
</dbReference>
<dbReference type="RefSeq" id="WP_012196216.1">
    <property type="nucleotide sequence ID" value="NC_009976.1"/>
</dbReference>
<dbReference type="SMR" id="A9BCN4"/>
<dbReference type="STRING" id="93059.P9211_16651"/>
<dbReference type="KEGG" id="pmj:P9211_16651"/>
<dbReference type="eggNOG" id="COG0096">
    <property type="taxonomic scope" value="Bacteria"/>
</dbReference>
<dbReference type="HOGENOM" id="CLU_098428_0_2_3"/>
<dbReference type="OrthoDB" id="9802617at2"/>
<dbReference type="Proteomes" id="UP000000788">
    <property type="component" value="Chromosome"/>
</dbReference>
<dbReference type="GO" id="GO:1990904">
    <property type="term" value="C:ribonucleoprotein complex"/>
    <property type="evidence" value="ECO:0007669"/>
    <property type="project" value="UniProtKB-KW"/>
</dbReference>
<dbReference type="GO" id="GO:0005840">
    <property type="term" value="C:ribosome"/>
    <property type="evidence" value="ECO:0007669"/>
    <property type="project" value="UniProtKB-KW"/>
</dbReference>
<dbReference type="GO" id="GO:0019843">
    <property type="term" value="F:rRNA binding"/>
    <property type="evidence" value="ECO:0007669"/>
    <property type="project" value="UniProtKB-UniRule"/>
</dbReference>
<dbReference type="GO" id="GO:0003735">
    <property type="term" value="F:structural constituent of ribosome"/>
    <property type="evidence" value="ECO:0007669"/>
    <property type="project" value="InterPro"/>
</dbReference>
<dbReference type="GO" id="GO:0006412">
    <property type="term" value="P:translation"/>
    <property type="evidence" value="ECO:0007669"/>
    <property type="project" value="UniProtKB-UniRule"/>
</dbReference>
<dbReference type="FunFam" id="3.30.1370.30:FF:000002">
    <property type="entry name" value="30S ribosomal protein S8"/>
    <property type="match status" value="1"/>
</dbReference>
<dbReference type="FunFam" id="3.30.1490.10:FF:000001">
    <property type="entry name" value="30S ribosomal protein S8"/>
    <property type="match status" value="1"/>
</dbReference>
<dbReference type="Gene3D" id="3.30.1370.30">
    <property type="match status" value="1"/>
</dbReference>
<dbReference type="Gene3D" id="3.30.1490.10">
    <property type="match status" value="1"/>
</dbReference>
<dbReference type="HAMAP" id="MF_01302_B">
    <property type="entry name" value="Ribosomal_uS8_B"/>
    <property type="match status" value="1"/>
</dbReference>
<dbReference type="InterPro" id="IPR000630">
    <property type="entry name" value="Ribosomal_uS8"/>
</dbReference>
<dbReference type="InterPro" id="IPR047863">
    <property type="entry name" value="Ribosomal_uS8_CS"/>
</dbReference>
<dbReference type="InterPro" id="IPR035987">
    <property type="entry name" value="Ribosomal_uS8_sf"/>
</dbReference>
<dbReference type="NCBIfam" id="NF001109">
    <property type="entry name" value="PRK00136.1"/>
    <property type="match status" value="1"/>
</dbReference>
<dbReference type="PANTHER" id="PTHR11758">
    <property type="entry name" value="40S RIBOSOMAL PROTEIN S15A"/>
    <property type="match status" value="1"/>
</dbReference>
<dbReference type="Pfam" id="PF00410">
    <property type="entry name" value="Ribosomal_S8"/>
    <property type="match status" value="1"/>
</dbReference>
<dbReference type="SUPFAM" id="SSF56047">
    <property type="entry name" value="Ribosomal protein S8"/>
    <property type="match status" value="1"/>
</dbReference>
<dbReference type="PROSITE" id="PS00053">
    <property type="entry name" value="RIBOSOMAL_S8"/>
    <property type="match status" value="1"/>
</dbReference>
<feature type="chain" id="PRO_1000140595" description="Small ribosomal subunit protein uS8">
    <location>
        <begin position="1"/>
        <end position="133"/>
    </location>
</feature>
<feature type="region of interest" description="Disordered" evidence="2">
    <location>
        <begin position="1"/>
        <end position="29"/>
    </location>
</feature>
<feature type="compositionally biased region" description="Basic and acidic residues" evidence="2">
    <location>
        <begin position="16"/>
        <end position="25"/>
    </location>
</feature>
<accession>A9BCN4</accession>
<gene>
    <name evidence="1" type="primary">rpsH</name>
    <name evidence="1" type="synonym">rps8</name>
    <name type="ordered locus">P9211_16651</name>
</gene>
<evidence type="ECO:0000255" key="1">
    <source>
        <dbReference type="HAMAP-Rule" id="MF_01302"/>
    </source>
</evidence>
<evidence type="ECO:0000256" key="2">
    <source>
        <dbReference type="SAM" id="MobiDB-lite"/>
    </source>
</evidence>
<evidence type="ECO:0000305" key="3"/>
<reference key="1">
    <citation type="journal article" date="2007" name="PLoS Genet.">
        <title>Patterns and implications of gene gain and loss in the evolution of Prochlorococcus.</title>
        <authorList>
            <person name="Kettler G.C."/>
            <person name="Martiny A.C."/>
            <person name="Huang K."/>
            <person name="Zucker J."/>
            <person name="Coleman M.L."/>
            <person name="Rodrigue S."/>
            <person name="Chen F."/>
            <person name="Lapidus A."/>
            <person name="Ferriera S."/>
            <person name="Johnson J."/>
            <person name="Steglich C."/>
            <person name="Church G.M."/>
            <person name="Richardson P."/>
            <person name="Chisholm S.W."/>
        </authorList>
    </citation>
    <scope>NUCLEOTIDE SEQUENCE [LARGE SCALE GENOMIC DNA]</scope>
    <source>
        <strain>MIT 9211</strain>
    </source>
</reference>
<proteinExistence type="inferred from homology"/>
<protein>
    <recommendedName>
        <fullName evidence="1">Small ribosomal subunit protein uS8</fullName>
    </recommendedName>
    <alternativeName>
        <fullName evidence="3">30S ribosomal protein S8</fullName>
    </alternativeName>
</protein>
<keyword id="KW-1185">Reference proteome</keyword>
<keyword id="KW-0687">Ribonucleoprotein</keyword>
<keyword id="KW-0689">Ribosomal protein</keyword>
<keyword id="KW-0694">RNA-binding</keyword>
<keyword id="KW-0699">rRNA-binding</keyword>
<name>RS8_PROM4</name>
<sequence length="133" mass="14836">MANHDPISDMLTRIRNASEKRHETTRIPASRMSRSIAKVLQKEGFIAQISEEGEGFKTQLVLELKYSGKHRHPTIRSMQRVSKPGLRIYKNTRGLPKILGGLGVAIISTSKGVMSDRDARKQGVGGEVLCYVY</sequence>
<organism>
    <name type="scientific">Prochlorococcus marinus (strain MIT 9211)</name>
    <dbReference type="NCBI Taxonomy" id="93059"/>
    <lineage>
        <taxon>Bacteria</taxon>
        <taxon>Bacillati</taxon>
        <taxon>Cyanobacteriota</taxon>
        <taxon>Cyanophyceae</taxon>
        <taxon>Synechococcales</taxon>
        <taxon>Prochlorococcaceae</taxon>
        <taxon>Prochlorococcus</taxon>
    </lineage>
</organism>
<comment type="function">
    <text evidence="1">One of the primary rRNA binding proteins, it binds directly to 16S rRNA central domain where it helps coordinate assembly of the platform of the 30S subunit.</text>
</comment>
<comment type="subunit">
    <text evidence="1">Part of the 30S ribosomal subunit. Contacts proteins S5 and S12.</text>
</comment>
<comment type="similarity">
    <text evidence="1">Belongs to the universal ribosomal protein uS8 family.</text>
</comment>